<gene>
    <name evidence="1" type="primary">rpsN</name>
    <name type="ordered locus">BU511</name>
</gene>
<proteinExistence type="inferred from homology"/>
<protein>
    <recommendedName>
        <fullName evidence="1">Small ribosomal subunit protein uS14</fullName>
    </recommendedName>
    <alternativeName>
        <fullName evidence="2">30S ribosomal protein S14</fullName>
    </alternativeName>
</protein>
<name>RS14_BUCAI</name>
<comment type="function">
    <text evidence="1">Binds 16S rRNA, required for the assembly of 30S particles and may also be responsible for determining the conformation of the 16S rRNA at the A site.</text>
</comment>
<comment type="subunit">
    <text evidence="1">Part of the 30S ribosomal subunit. Contacts proteins S3 and S10.</text>
</comment>
<comment type="similarity">
    <text evidence="1">Belongs to the universal ribosomal protein uS14 family.</text>
</comment>
<organism>
    <name type="scientific">Buchnera aphidicola subsp. Acyrthosiphon pisum (strain APS)</name>
    <name type="common">Acyrthosiphon pisum symbiotic bacterium</name>
    <dbReference type="NCBI Taxonomy" id="107806"/>
    <lineage>
        <taxon>Bacteria</taxon>
        <taxon>Pseudomonadati</taxon>
        <taxon>Pseudomonadota</taxon>
        <taxon>Gammaproteobacteria</taxon>
        <taxon>Enterobacterales</taxon>
        <taxon>Erwiniaceae</taxon>
        <taxon>Buchnera</taxon>
    </lineage>
</organism>
<accession>P57578</accession>
<sequence>MAKQSMKAREVKRVKLANKFYTQRHELKNIISNMSISEEERWNAVLKLQSFPRDSSPSRQRNRCRQTGRPHAFLRKFGLSRIKVREAAMKGEIPGLKKASW</sequence>
<dbReference type="EMBL" id="BA000003">
    <property type="protein sequence ID" value="BAB13204.1"/>
    <property type="molecule type" value="Genomic_DNA"/>
</dbReference>
<dbReference type="RefSeq" id="NP_240318.1">
    <property type="nucleotide sequence ID" value="NC_002528.1"/>
</dbReference>
<dbReference type="RefSeq" id="WP_009874462.1">
    <property type="nucleotide sequence ID" value="NZ_AP036055.1"/>
</dbReference>
<dbReference type="SMR" id="P57578"/>
<dbReference type="STRING" id="563178.BUAP5A_504"/>
<dbReference type="EnsemblBacteria" id="BAB13204">
    <property type="protein sequence ID" value="BAB13204"/>
    <property type="gene ID" value="BAB13204"/>
</dbReference>
<dbReference type="KEGG" id="buc:BU511"/>
<dbReference type="PATRIC" id="fig|107806.10.peg.516"/>
<dbReference type="eggNOG" id="COG0199">
    <property type="taxonomic scope" value="Bacteria"/>
</dbReference>
<dbReference type="HOGENOM" id="CLU_139869_0_1_6"/>
<dbReference type="Proteomes" id="UP000001806">
    <property type="component" value="Chromosome"/>
</dbReference>
<dbReference type="GO" id="GO:0005737">
    <property type="term" value="C:cytoplasm"/>
    <property type="evidence" value="ECO:0007669"/>
    <property type="project" value="UniProtKB-ARBA"/>
</dbReference>
<dbReference type="GO" id="GO:0015935">
    <property type="term" value="C:small ribosomal subunit"/>
    <property type="evidence" value="ECO:0007669"/>
    <property type="project" value="TreeGrafter"/>
</dbReference>
<dbReference type="GO" id="GO:0019843">
    <property type="term" value="F:rRNA binding"/>
    <property type="evidence" value="ECO:0007669"/>
    <property type="project" value="UniProtKB-UniRule"/>
</dbReference>
<dbReference type="GO" id="GO:0003735">
    <property type="term" value="F:structural constituent of ribosome"/>
    <property type="evidence" value="ECO:0007669"/>
    <property type="project" value="InterPro"/>
</dbReference>
<dbReference type="GO" id="GO:0006412">
    <property type="term" value="P:translation"/>
    <property type="evidence" value="ECO:0007669"/>
    <property type="project" value="UniProtKB-UniRule"/>
</dbReference>
<dbReference type="FunFam" id="1.10.287.1480:FF:000001">
    <property type="entry name" value="30S ribosomal protein S14"/>
    <property type="match status" value="1"/>
</dbReference>
<dbReference type="Gene3D" id="1.10.287.1480">
    <property type="match status" value="1"/>
</dbReference>
<dbReference type="HAMAP" id="MF_00537">
    <property type="entry name" value="Ribosomal_uS14_1"/>
    <property type="match status" value="1"/>
</dbReference>
<dbReference type="InterPro" id="IPR001209">
    <property type="entry name" value="Ribosomal_uS14"/>
</dbReference>
<dbReference type="InterPro" id="IPR023036">
    <property type="entry name" value="Ribosomal_uS14_bac/plastid"/>
</dbReference>
<dbReference type="InterPro" id="IPR018271">
    <property type="entry name" value="Ribosomal_uS14_CS"/>
</dbReference>
<dbReference type="NCBIfam" id="NF006477">
    <property type="entry name" value="PRK08881.1"/>
    <property type="match status" value="1"/>
</dbReference>
<dbReference type="PANTHER" id="PTHR19836">
    <property type="entry name" value="30S RIBOSOMAL PROTEIN S14"/>
    <property type="match status" value="1"/>
</dbReference>
<dbReference type="PANTHER" id="PTHR19836:SF19">
    <property type="entry name" value="SMALL RIBOSOMAL SUBUNIT PROTEIN US14M"/>
    <property type="match status" value="1"/>
</dbReference>
<dbReference type="Pfam" id="PF00253">
    <property type="entry name" value="Ribosomal_S14"/>
    <property type="match status" value="1"/>
</dbReference>
<dbReference type="SUPFAM" id="SSF57716">
    <property type="entry name" value="Glucocorticoid receptor-like (DNA-binding domain)"/>
    <property type="match status" value="1"/>
</dbReference>
<dbReference type="PROSITE" id="PS00527">
    <property type="entry name" value="RIBOSOMAL_S14"/>
    <property type="match status" value="1"/>
</dbReference>
<reference key="1">
    <citation type="journal article" date="2000" name="Nature">
        <title>Genome sequence of the endocellular bacterial symbiont of aphids Buchnera sp. APS.</title>
        <authorList>
            <person name="Shigenobu S."/>
            <person name="Watanabe H."/>
            <person name="Hattori M."/>
            <person name="Sakaki Y."/>
            <person name="Ishikawa H."/>
        </authorList>
    </citation>
    <scope>NUCLEOTIDE SEQUENCE [LARGE SCALE GENOMIC DNA]</scope>
    <source>
        <strain>APS</strain>
    </source>
</reference>
<keyword id="KW-1185">Reference proteome</keyword>
<keyword id="KW-0687">Ribonucleoprotein</keyword>
<keyword id="KW-0689">Ribosomal protein</keyword>
<keyword id="KW-0694">RNA-binding</keyword>
<keyword id="KW-0699">rRNA-binding</keyword>
<feature type="chain" id="PRO_0000130877" description="Small ribosomal subunit protein uS14">
    <location>
        <begin position="1"/>
        <end position="101"/>
    </location>
</feature>
<evidence type="ECO:0000255" key="1">
    <source>
        <dbReference type="HAMAP-Rule" id="MF_00537"/>
    </source>
</evidence>
<evidence type="ECO:0000305" key="2"/>